<gene>
    <name evidence="1" type="primary">hutU</name>
    <name type="ordered locus">YPTS_4070</name>
</gene>
<accession>B2K6P6</accession>
<sequence>MTTQNRFRDNEIRAPQGTQLTAKSWLTEAALRMLMNNLDPDVAENPKELVVYGGIGRAARNWECYDKIVESLINLNDDETLLIQSGKPVGIFKTHSNAPRVLIANSNLVPHWANWEHFNELDAKGLAMYGQMTAGSWIYIGSQGIVQGTYETFVEAGRQHFGGSLKGRWVLTAGLGGMGGAQPLAATLAGACSLNIECQQSRIDFRLKTRYVDEQATDLDDALARIEKYTATGVAVSIALCGNAAEILPELVRRGVRPDMVTDQTSAHDPLNGYLPKGWNWEEYRQRAQHEPALVINAAKISMAEHVEAMLAFHNMGIPTFDYGNNIRQMAHDMGVIRAFDFPGFVPAYIRPLFCRGIGPFRWVALSGNPDDIYKTDAKVKALIPDDAHLHHWLDMARERIRFQGLPARICWVGLGQRAKLGLAFNEMVRSGELSAPVVIGRDHLDSGSVASPNRETEAMQDGSDAVSDWPLLNALLNTASGATWVSLHHGGGVGMGFSQHSGMVVVCDGSDEAAERIARVLHNDPATGVMRHADAGYDIAVNCAQEQGLNLPMVAATQGKKS</sequence>
<name>HUTU_YERPB</name>
<organism>
    <name type="scientific">Yersinia pseudotuberculosis serotype IB (strain PB1/+)</name>
    <dbReference type="NCBI Taxonomy" id="502801"/>
    <lineage>
        <taxon>Bacteria</taxon>
        <taxon>Pseudomonadati</taxon>
        <taxon>Pseudomonadota</taxon>
        <taxon>Gammaproteobacteria</taxon>
        <taxon>Enterobacterales</taxon>
        <taxon>Yersiniaceae</taxon>
        <taxon>Yersinia</taxon>
    </lineage>
</organism>
<comment type="function">
    <text evidence="1">Catalyzes the conversion of urocanate to 4-imidazolone-5-propionate.</text>
</comment>
<comment type="catalytic activity">
    <reaction evidence="1">
        <text>4-imidazolone-5-propanoate = trans-urocanate + H2O</text>
        <dbReference type="Rhea" id="RHEA:13101"/>
        <dbReference type="ChEBI" id="CHEBI:15377"/>
        <dbReference type="ChEBI" id="CHEBI:17771"/>
        <dbReference type="ChEBI" id="CHEBI:77893"/>
        <dbReference type="EC" id="4.2.1.49"/>
    </reaction>
</comment>
<comment type="cofactor">
    <cofactor evidence="1">
        <name>NAD(+)</name>
        <dbReference type="ChEBI" id="CHEBI:57540"/>
    </cofactor>
    <text evidence="1">Binds 1 NAD(+) per subunit.</text>
</comment>
<comment type="pathway">
    <text evidence="1">Amino-acid degradation; L-histidine degradation into L-glutamate; N-formimidoyl-L-glutamate from L-histidine: step 2/3.</text>
</comment>
<comment type="subcellular location">
    <subcellularLocation>
        <location evidence="1">Cytoplasm</location>
    </subcellularLocation>
</comment>
<comment type="similarity">
    <text evidence="1">Belongs to the urocanase family.</text>
</comment>
<evidence type="ECO:0000255" key="1">
    <source>
        <dbReference type="HAMAP-Rule" id="MF_00577"/>
    </source>
</evidence>
<protein>
    <recommendedName>
        <fullName evidence="1">Urocanate hydratase</fullName>
        <shortName evidence="1">Urocanase</shortName>
        <ecNumber evidence="1">4.2.1.49</ecNumber>
    </recommendedName>
    <alternativeName>
        <fullName evidence="1">Imidazolonepropionate hydrolase</fullName>
    </alternativeName>
</protein>
<feature type="chain" id="PRO_1000129583" description="Urocanate hydratase">
    <location>
        <begin position="1"/>
        <end position="563"/>
    </location>
</feature>
<feature type="active site" evidence="1">
    <location>
        <position position="411"/>
    </location>
</feature>
<feature type="binding site" evidence="1">
    <location>
        <begin position="53"/>
        <end position="54"/>
    </location>
    <ligand>
        <name>NAD(+)</name>
        <dbReference type="ChEBI" id="CHEBI:57540"/>
    </ligand>
</feature>
<feature type="binding site" evidence="1">
    <location>
        <position position="131"/>
    </location>
    <ligand>
        <name>NAD(+)</name>
        <dbReference type="ChEBI" id="CHEBI:57540"/>
    </ligand>
</feature>
<feature type="binding site" evidence="1">
    <location>
        <begin position="177"/>
        <end position="179"/>
    </location>
    <ligand>
        <name>NAD(+)</name>
        <dbReference type="ChEBI" id="CHEBI:57540"/>
    </ligand>
</feature>
<feature type="binding site" evidence="1">
    <location>
        <position position="197"/>
    </location>
    <ligand>
        <name>NAD(+)</name>
        <dbReference type="ChEBI" id="CHEBI:57540"/>
    </ligand>
</feature>
<feature type="binding site" evidence="1">
    <location>
        <position position="202"/>
    </location>
    <ligand>
        <name>NAD(+)</name>
        <dbReference type="ChEBI" id="CHEBI:57540"/>
    </ligand>
</feature>
<feature type="binding site" evidence="1">
    <location>
        <begin position="243"/>
        <end position="244"/>
    </location>
    <ligand>
        <name>NAD(+)</name>
        <dbReference type="ChEBI" id="CHEBI:57540"/>
    </ligand>
</feature>
<feature type="binding site" evidence="1">
    <location>
        <begin position="264"/>
        <end position="268"/>
    </location>
    <ligand>
        <name>NAD(+)</name>
        <dbReference type="ChEBI" id="CHEBI:57540"/>
    </ligand>
</feature>
<feature type="binding site" evidence="1">
    <location>
        <begin position="274"/>
        <end position="275"/>
    </location>
    <ligand>
        <name>NAD(+)</name>
        <dbReference type="ChEBI" id="CHEBI:57540"/>
    </ligand>
</feature>
<feature type="binding site" evidence="1">
    <location>
        <position position="323"/>
    </location>
    <ligand>
        <name>NAD(+)</name>
        <dbReference type="ChEBI" id="CHEBI:57540"/>
    </ligand>
</feature>
<feature type="binding site" evidence="1">
    <location>
        <position position="493"/>
    </location>
    <ligand>
        <name>NAD(+)</name>
        <dbReference type="ChEBI" id="CHEBI:57540"/>
    </ligand>
</feature>
<keyword id="KW-0963">Cytoplasm</keyword>
<keyword id="KW-0369">Histidine metabolism</keyword>
<keyword id="KW-0456">Lyase</keyword>
<keyword id="KW-0520">NAD</keyword>
<dbReference type="EC" id="4.2.1.49" evidence="1"/>
<dbReference type="EMBL" id="CP001048">
    <property type="protein sequence ID" value="ACC91018.1"/>
    <property type="molecule type" value="Genomic_DNA"/>
</dbReference>
<dbReference type="RefSeq" id="WP_002209576.1">
    <property type="nucleotide sequence ID" value="NZ_CP009780.1"/>
</dbReference>
<dbReference type="SMR" id="B2K6P6"/>
<dbReference type="GeneID" id="57974694"/>
<dbReference type="KEGG" id="ypb:YPTS_4070"/>
<dbReference type="PATRIC" id="fig|502801.10.peg.3541"/>
<dbReference type="UniPathway" id="UPA00379">
    <property type="reaction ID" value="UER00550"/>
</dbReference>
<dbReference type="GO" id="GO:0005737">
    <property type="term" value="C:cytoplasm"/>
    <property type="evidence" value="ECO:0007669"/>
    <property type="project" value="UniProtKB-SubCell"/>
</dbReference>
<dbReference type="GO" id="GO:0016153">
    <property type="term" value="F:urocanate hydratase activity"/>
    <property type="evidence" value="ECO:0007669"/>
    <property type="project" value="UniProtKB-UniRule"/>
</dbReference>
<dbReference type="GO" id="GO:0019556">
    <property type="term" value="P:L-histidine catabolic process to glutamate and formamide"/>
    <property type="evidence" value="ECO:0007669"/>
    <property type="project" value="UniProtKB-UniPathway"/>
</dbReference>
<dbReference type="GO" id="GO:0019557">
    <property type="term" value="P:L-histidine catabolic process to glutamate and formate"/>
    <property type="evidence" value="ECO:0007669"/>
    <property type="project" value="UniProtKB-UniPathway"/>
</dbReference>
<dbReference type="FunFam" id="3.40.50.10730:FF:000001">
    <property type="entry name" value="Urocanate hydratase"/>
    <property type="match status" value="1"/>
</dbReference>
<dbReference type="Gene3D" id="3.40.50.10730">
    <property type="entry name" value="Urocanase like domains"/>
    <property type="match status" value="1"/>
</dbReference>
<dbReference type="Gene3D" id="3.40.1770.10">
    <property type="entry name" value="Urocanase superfamily"/>
    <property type="match status" value="1"/>
</dbReference>
<dbReference type="HAMAP" id="MF_00577">
    <property type="entry name" value="HutU"/>
    <property type="match status" value="1"/>
</dbReference>
<dbReference type="InterPro" id="IPR055351">
    <property type="entry name" value="Urocanase"/>
</dbReference>
<dbReference type="InterPro" id="IPR023637">
    <property type="entry name" value="Urocanase-like"/>
</dbReference>
<dbReference type="InterPro" id="IPR035401">
    <property type="entry name" value="Urocanase_C"/>
</dbReference>
<dbReference type="InterPro" id="IPR038364">
    <property type="entry name" value="Urocanase_central_sf"/>
</dbReference>
<dbReference type="InterPro" id="IPR023636">
    <property type="entry name" value="Urocanase_CS"/>
</dbReference>
<dbReference type="InterPro" id="IPR035400">
    <property type="entry name" value="Urocanase_N"/>
</dbReference>
<dbReference type="InterPro" id="IPR035085">
    <property type="entry name" value="Urocanase_Rossmann-like"/>
</dbReference>
<dbReference type="InterPro" id="IPR036190">
    <property type="entry name" value="Urocanase_sf"/>
</dbReference>
<dbReference type="NCBIfam" id="TIGR01228">
    <property type="entry name" value="hutU"/>
    <property type="match status" value="1"/>
</dbReference>
<dbReference type="NCBIfam" id="NF003820">
    <property type="entry name" value="PRK05414.1"/>
    <property type="match status" value="1"/>
</dbReference>
<dbReference type="PANTHER" id="PTHR12216">
    <property type="entry name" value="UROCANATE HYDRATASE"/>
    <property type="match status" value="1"/>
</dbReference>
<dbReference type="PANTHER" id="PTHR12216:SF4">
    <property type="entry name" value="UROCANATE HYDRATASE"/>
    <property type="match status" value="1"/>
</dbReference>
<dbReference type="Pfam" id="PF01175">
    <property type="entry name" value="Urocanase"/>
    <property type="match status" value="1"/>
</dbReference>
<dbReference type="Pfam" id="PF17392">
    <property type="entry name" value="Urocanase_C"/>
    <property type="match status" value="1"/>
</dbReference>
<dbReference type="Pfam" id="PF17391">
    <property type="entry name" value="Urocanase_N"/>
    <property type="match status" value="1"/>
</dbReference>
<dbReference type="PIRSF" id="PIRSF001423">
    <property type="entry name" value="Urocanate_hydrat"/>
    <property type="match status" value="1"/>
</dbReference>
<dbReference type="SUPFAM" id="SSF111326">
    <property type="entry name" value="Urocanase"/>
    <property type="match status" value="1"/>
</dbReference>
<dbReference type="PROSITE" id="PS01233">
    <property type="entry name" value="UROCANASE"/>
    <property type="match status" value="1"/>
</dbReference>
<proteinExistence type="inferred from homology"/>
<reference key="1">
    <citation type="submission" date="2008-04" db="EMBL/GenBank/DDBJ databases">
        <title>Complete sequence of Yersinia pseudotuberculosis PB1/+.</title>
        <authorList>
            <person name="Copeland A."/>
            <person name="Lucas S."/>
            <person name="Lapidus A."/>
            <person name="Glavina del Rio T."/>
            <person name="Dalin E."/>
            <person name="Tice H."/>
            <person name="Bruce D."/>
            <person name="Goodwin L."/>
            <person name="Pitluck S."/>
            <person name="Munk A.C."/>
            <person name="Brettin T."/>
            <person name="Detter J.C."/>
            <person name="Han C."/>
            <person name="Tapia R."/>
            <person name="Schmutz J."/>
            <person name="Larimer F."/>
            <person name="Land M."/>
            <person name="Hauser L."/>
            <person name="Challacombe J.F."/>
            <person name="Green L."/>
            <person name="Lindler L.E."/>
            <person name="Nikolich M.P."/>
            <person name="Richardson P."/>
        </authorList>
    </citation>
    <scope>NUCLEOTIDE SEQUENCE [LARGE SCALE GENOMIC DNA]</scope>
    <source>
        <strain>PB1/+</strain>
    </source>
</reference>